<feature type="chain" id="PRO_0000205160" description="Protein transport protein SEC24 B">
    <location>
        <begin position="1"/>
        <end position="1096"/>
    </location>
</feature>
<feature type="region of interest" description="Disordered" evidence="2">
    <location>
        <begin position="1"/>
        <end position="315"/>
    </location>
</feature>
<feature type="region of interest" description="Zinc finger-like" evidence="1">
    <location>
        <begin position="433"/>
        <end position="458"/>
    </location>
</feature>
<feature type="compositionally biased region" description="Low complexity" evidence="2">
    <location>
        <begin position="12"/>
        <end position="23"/>
    </location>
</feature>
<feature type="compositionally biased region" description="Polar residues" evidence="2">
    <location>
        <begin position="27"/>
        <end position="45"/>
    </location>
</feature>
<feature type="compositionally biased region" description="Pro residues" evidence="2">
    <location>
        <begin position="47"/>
        <end position="64"/>
    </location>
</feature>
<feature type="compositionally biased region" description="Low complexity" evidence="2">
    <location>
        <begin position="65"/>
        <end position="78"/>
    </location>
</feature>
<feature type="compositionally biased region" description="Pro residues" evidence="2">
    <location>
        <begin position="79"/>
        <end position="92"/>
    </location>
</feature>
<feature type="compositionally biased region" description="Low complexity" evidence="2">
    <location>
        <begin position="93"/>
        <end position="107"/>
    </location>
</feature>
<feature type="compositionally biased region" description="Pro residues" evidence="2">
    <location>
        <begin position="108"/>
        <end position="122"/>
    </location>
</feature>
<feature type="compositionally biased region" description="Low complexity" evidence="2">
    <location>
        <begin position="140"/>
        <end position="149"/>
    </location>
</feature>
<feature type="compositionally biased region" description="Pro residues" evidence="2">
    <location>
        <begin position="150"/>
        <end position="160"/>
    </location>
</feature>
<feature type="compositionally biased region" description="Pro residues" evidence="2">
    <location>
        <begin position="171"/>
        <end position="186"/>
    </location>
</feature>
<feature type="compositionally biased region" description="Pro residues" evidence="2">
    <location>
        <begin position="246"/>
        <end position="258"/>
    </location>
</feature>
<feature type="compositionally biased region" description="Pro residues" evidence="2">
    <location>
        <begin position="287"/>
        <end position="303"/>
    </location>
</feature>
<feature type="binding site" evidence="1">
    <location>
        <position position="433"/>
    </location>
    <ligand>
        <name>Zn(2+)</name>
        <dbReference type="ChEBI" id="CHEBI:29105"/>
    </ligand>
</feature>
<feature type="binding site" evidence="1">
    <location>
        <position position="436"/>
    </location>
    <ligand>
        <name>Zn(2+)</name>
        <dbReference type="ChEBI" id="CHEBI:29105"/>
    </ligand>
</feature>
<feature type="binding site" evidence="1">
    <location>
        <position position="455"/>
    </location>
    <ligand>
        <name>Zn(2+)</name>
        <dbReference type="ChEBI" id="CHEBI:29105"/>
    </ligand>
</feature>
<feature type="binding site" evidence="1">
    <location>
        <position position="458"/>
    </location>
    <ligand>
        <name>Zn(2+)</name>
        <dbReference type="ChEBI" id="CHEBI:29105"/>
    </ligand>
</feature>
<feature type="sequence conflict" description="In Ref. 1; CAC16574." evidence="8" ref="1">
    <original>Q</original>
    <variation>QQ</variation>
    <location>
        <position position="76"/>
    </location>
</feature>
<feature type="sequence conflict" description="In Ref. 1; CAC16574." evidence="8" ref="1">
    <original>P</original>
    <variation>T</variation>
    <location>
        <position position="219"/>
    </location>
</feature>
<feature type="sequence conflict" description="In Ref. 1; CAC16574." evidence="8" ref="1">
    <original>P</original>
    <variation>A</variation>
    <location>
        <position position="277"/>
    </location>
</feature>
<proteinExistence type="evidence at transcript level"/>
<sequence>MAAPVPPGAYRPNNNQQNSGGPPNFVPGSQGNPNSLAANMQNLNINRPPPPMPGSGPRPSPPFGQSPQSFPQQQQQQPRPSPMARPGPPPPAAMARPGGPPQVSQPGGFPPVGRPVAPPSNQPPFGGRPSTGPLVGGGSSFPQPGGFPASGPPGGVPSGPPSGARPIGFGSPPPMGPGMSMPPPSGMPGGPLSNGPPPSGMHGGHLSNGPPPSGMPGGPLSNGPPPPMMGPGAFPRGSQFTSGPMMAPPPPYGQPPNAGPFTGNSPLSSPPAHSIPPPTNFPGVPYGRPPMPGGFPYGAPPQQLPSAPGTPGSIYGMGPMQNQSMTSVSSPSKIDLNQIPRPGSSSSPIVYETRVENKANPPPPTTVDYITRDTGNSSPRYMRCTINQIPCTVDLLSTSGMQLALIVQPMALSHPSEEPIQVVDFGESGPVRCSRCKGYVNPFMKFIDQGRKFICNLCGYTDETPRDYQCNLGPDGRRRDADERPELCRGTVDFVATKEYMVRDPMPAVYFFLIDVSMNAIQTGATAAACSAIQQVLSDLPEGPRTFVGIATFDSTIHFYNLKRALQQPLMLIVPDVQDVYTPLETDVIVQLSECRQHLEILLESIPTMFQESKSPESAFGAAVKAAFLAMKSTGGKLMVFQSVLPSVGIGALSSREADGRANASAGEKEAHKLLQPADKTLRTMAIEFAEYQVCVDLFITTQAYVDMASISEIPRTTGGQVYCYYPFSALSDPPKLYNDLRWNITRPQGFEAVMRVRCSQGIQVQEYSGNFCKRIPTDIDLPAIDCDKAIMVTLKHDDKLQDGAECGFQCALLYTTISGERRIRVLNLSIPCTNMLSNLFRSADLDSQFACMLKQAANEIPSKALPLVKEQATNDCITILHSYRKFCATVTSTGQLILPEALKLLPLYTLALTKGVGLRMDGRIDDRSFWINHVSSLSTPLAIPLVYPRMIAVHDLDANDNEENVVPCPIPLQSEHLSDEGVYFLENGEDGLIYIGESVNSDILQKLFNVRSAAELPSQYVLQKYDNQLSKKFNDVVNEIRRQRSSYLRIKLCKKGDPAGNMLFQSYMVEDRGSGGASYVDFLVSVHRQIQHKLN</sequence>
<comment type="function">
    <text evidence="1">Component of the coat protein complex II (COPII), that covers ER-derived vesicles involved in transport from the endoplasmic reticulum to the Golgi apparatus. COPII is composed of at least five proteins: the SEC23/24 complex, the SEC13/31 complex, and the protein SAR1. Acts in the cytoplasm to promote the transport of secretory, plasma membrane, and vacuolar proteins from the endoplasmic reticulum to the Golgi complex.</text>
</comment>
<comment type="subunit">
    <text evidence="1">Component of the coat protein complex II (COPII), composed of at least five proteins: the Sec23/24 complex, the Sec13/31 complex and Sar1.</text>
</comment>
<comment type="subcellular location">
    <subcellularLocation>
        <location evidence="1">Cytoplasmic vesicle</location>
        <location evidence="1">COPII-coated vesicle membrane</location>
        <topology evidence="1">Peripheral membrane protein</topology>
        <orientation evidence="1">Cytoplasmic side</orientation>
    </subcellularLocation>
    <subcellularLocation>
        <location evidence="1">Endoplasmic reticulum membrane</location>
        <topology evidence="1">Peripheral membrane protein</topology>
    </subcellularLocation>
    <subcellularLocation>
        <location evidence="1">Golgi apparatus membrane</location>
        <topology evidence="1">Peripheral membrane protein</topology>
    </subcellularLocation>
</comment>
<comment type="alternative products">
    <event type="alternative splicing"/>
    <isoform>
        <id>Q9M291-1</id>
        <name>1</name>
        <sequence type="displayed"/>
    </isoform>
    <text>A number of isoforms are produced. According to EST sequences.</text>
</comment>
<comment type="tissue specificity">
    <text evidence="3">Mainly expressed in pollen, roots, stems, petioles and hypocotyls, and, to a lower extent, in leaves and cotyledons.</text>
</comment>
<comment type="developmental stage">
    <text evidence="3">During pollen development, accumulates progressively in uninucleate microspores (UNMS) and bicellular pollen (BICP) to reach a maximal peak in immature tricellular pollen (TRCP), and fades out in mature pollen grains (MPGR) (PubMed:21705385). Strongly expressed in germinating pollen (PubMed:21705385).</text>
</comment>
<comment type="similarity">
    <text evidence="8">Belongs to the SEC23/SEC24 family. SEC24 subfamily.</text>
</comment>
<comment type="sequence caution" evidence="8">
    <conflict type="erroneous gene model prediction">
        <sequence resource="EMBL-CDS" id="CAB86912"/>
    </conflict>
</comment>
<name>SC24B_ARATH</name>
<dbReference type="EMBL" id="AJ251579">
    <property type="protein sequence ID" value="CAC16574.1"/>
    <property type="molecule type" value="mRNA"/>
</dbReference>
<dbReference type="EMBL" id="AL138641">
    <property type="protein sequence ID" value="CAB86912.1"/>
    <property type="status" value="ALT_SEQ"/>
    <property type="molecule type" value="Genomic_DNA"/>
</dbReference>
<dbReference type="EMBL" id="CP002686">
    <property type="protein sequence ID" value="AEE77893.1"/>
    <property type="molecule type" value="Genomic_DNA"/>
</dbReference>
<dbReference type="EMBL" id="CP002686">
    <property type="protein sequence ID" value="ANM64942.1"/>
    <property type="molecule type" value="Genomic_DNA"/>
</dbReference>
<dbReference type="EMBL" id="CP002686">
    <property type="protein sequence ID" value="ANM64944.1"/>
    <property type="molecule type" value="Genomic_DNA"/>
</dbReference>
<dbReference type="PIR" id="T47424">
    <property type="entry name" value="T47424"/>
</dbReference>
<dbReference type="RefSeq" id="NP_001326943.1">
    <molecule id="Q9M291-1"/>
    <property type="nucleotide sequence ID" value="NM_001339129.1"/>
</dbReference>
<dbReference type="RefSeq" id="NP_001326945.1">
    <molecule id="Q9M291-1"/>
    <property type="nucleotide sequence ID" value="NM_001339130.1"/>
</dbReference>
<dbReference type="RefSeq" id="NP_566869.1">
    <molecule id="Q9M291-1"/>
    <property type="nucleotide sequence ID" value="NM_114302.3"/>
</dbReference>
<dbReference type="SMR" id="Q9M291"/>
<dbReference type="BioGRID" id="8879">
    <property type="interactions" value="7"/>
</dbReference>
<dbReference type="FunCoup" id="Q9M291">
    <property type="interactions" value="4485"/>
</dbReference>
<dbReference type="STRING" id="3702.Q9M291"/>
<dbReference type="GlyGen" id="Q9M291">
    <property type="glycosylation" value="1 site"/>
</dbReference>
<dbReference type="iPTMnet" id="Q9M291"/>
<dbReference type="PaxDb" id="3702-AT3G44340.1"/>
<dbReference type="ProteomicsDB" id="232935">
    <molecule id="Q9M291-1"/>
</dbReference>
<dbReference type="EnsemblPlants" id="AT3G44340.1">
    <molecule id="Q9M291-1"/>
    <property type="protein sequence ID" value="AT3G44340.1"/>
    <property type="gene ID" value="AT3G44340"/>
</dbReference>
<dbReference type="EnsemblPlants" id="AT3G44340.3">
    <molecule id="Q9M291-1"/>
    <property type="protein sequence ID" value="AT3G44340.3"/>
    <property type="gene ID" value="AT3G44340"/>
</dbReference>
<dbReference type="EnsemblPlants" id="AT3G44340.4">
    <molecule id="Q9M291-1"/>
    <property type="protein sequence ID" value="AT3G44340.4"/>
    <property type="gene ID" value="AT3G44340"/>
</dbReference>
<dbReference type="GeneID" id="823559"/>
<dbReference type="Gramene" id="AT3G44340.1">
    <molecule id="Q9M291-1"/>
    <property type="protein sequence ID" value="AT3G44340.1"/>
    <property type="gene ID" value="AT3G44340"/>
</dbReference>
<dbReference type="Gramene" id="AT3G44340.3">
    <molecule id="Q9M291-1"/>
    <property type="protein sequence ID" value="AT3G44340.3"/>
    <property type="gene ID" value="AT3G44340"/>
</dbReference>
<dbReference type="Gramene" id="AT3G44340.4">
    <molecule id="Q9M291-1"/>
    <property type="protein sequence ID" value="AT3G44340.4"/>
    <property type="gene ID" value="AT3G44340"/>
</dbReference>
<dbReference type="KEGG" id="ath:AT3G44340"/>
<dbReference type="Araport" id="AT3G44340"/>
<dbReference type="TAIR" id="AT3G44340">
    <property type="gene designation" value="CEF"/>
</dbReference>
<dbReference type="eggNOG" id="KOG1984">
    <property type="taxonomic scope" value="Eukaryota"/>
</dbReference>
<dbReference type="HOGENOM" id="CLU_004589_1_1_1"/>
<dbReference type="InParanoid" id="Q9M291"/>
<dbReference type="OMA" id="TIPSNEX"/>
<dbReference type="CD-CODE" id="4299E36E">
    <property type="entry name" value="Nucleolus"/>
</dbReference>
<dbReference type="PRO" id="PR:Q9M291"/>
<dbReference type="Proteomes" id="UP000006548">
    <property type="component" value="Chromosome 3"/>
</dbReference>
<dbReference type="ExpressionAtlas" id="Q9M291">
    <property type="expression patterns" value="baseline and differential"/>
</dbReference>
<dbReference type="GO" id="GO:0030127">
    <property type="term" value="C:COPII vesicle coat"/>
    <property type="evidence" value="ECO:0007669"/>
    <property type="project" value="InterPro"/>
</dbReference>
<dbReference type="GO" id="GO:0005789">
    <property type="term" value="C:endoplasmic reticulum membrane"/>
    <property type="evidence" value="ECO:0007669"/>
    <property type="project" value="UniProtKB-SubCell"/>
</dbReference>
<dbReference type="GO" id="GO:0000139">
    <property type="term" value="C:Golgi membrane"/>
    <property type="evidence" value="ECO:0007669"/>
    <property type="project" value="UniProtKB-SubCell"/>
</dbReference>
<dbReference type="GO" id="GO:0008270">
    <property type="term" value="F:zinc ion binding"/>
    <property type="evidence" value="ECO:0007669"/>
    <property type="project" value="InterPro"/>
</dbReference>
<dbReference type="GO" id="GO:0006888">
    <property type="term" value="P:endoplasmic reticulum to Golgi vesicle-mediated transport"/>
    <property type="evidence" value="ECO:0007669"/>
    <property type="project" value="InterPro"/>
</dbReference>
<dbReference type="GO" id="GO:0006886">
    <property type="term" value="P:intracellular protein transport"/>
    <property type="evidence" value="ECO:0007669"/>
    <property type="project" value="InterPro"/>
</dbReference>
<dbReference type="GO" id="GO:0006979">
    <property type="term" value="P:response to oxidative stress"/>
    <property type="evidence" value="ECO:0000270"/>
    <property type="project" value="TAIR"/>
</dbReference>
<dbReference type="CDD" id="cd01479">
    <property type="entry name" value="Sec24-like"/>
    <property type="match status" value="1"/>
</dbReference>
<dbReference type="FunFam" id="3.40.50.410:FF:000097">
    <property type="entry name" value="Protein transport protein Sec24-like CEF"/>
    <property type="match status" value="1"/>
</dbReference>
<dbReference type="Gene3D" id="2.60.40.1670">
    <property type="entry name" value="beta-sandwich domain of Sec23/24"/>
    <property type="match status" value="1"/>
</dbReference>
<dbReference type="Gene3D" id="1.20.120.730">
    <property type="entry name" value="Sec23/Sec24 helical domain"/>
    <property type="match status" value="1"/>
</dbReference>
<dbReference type="Gene3D" id="3.40.20.10">
    <property type="entry name" value="Severin"/>
    <property type="match status" value="1"/>
</dbReference>
<dbReference type="Gene3D" id="3.40.50.410">
    <property type="entry name" value="von Willebrand factor, type A domain"/>
    <property type="match status" value="1"/>
</dbReference>
<dbReference type="Gene3D" id="2.30.30.380">
    <property type="entry name" value="Zn-finger domain of Sec23/24"/>
    <property type="match status" value="1"/>
</dbReference>
<dbReference type="InterPro" id="IPR029006">
    <property type="entry name" value="ADF-H/Gelsolin-like_dom_sf"/>
</dbReference>
<dbReference type="InterPro" id="IPR007123">
    <property type="entry name" value="Gelsolin-like_dom"/>
</dbReference>
<dbReference type="InterPro" id="IPR036180">
    <property type="entry name" value="Gelsolin-like_dom_sf"/>
</dbReference>
<dbReference type="InterPro" id="IPR006900">
    <property type="entry name" value="Sec23/24_helical_dom"/>
</dbReference>
<dbReference type="InterPro" id="IPR036175">
    <property type="entry name" value="Sec23/24_helical_dom_sf"/>
</dbReference>
<dbReference type="InterPro" id="IPR006896">
    <property type="entry name" value="Sec23/24_trunk_dom"/>
</dbReference>
<dbReference type="InterPro" id="IPR012990">
    <property type="entry name" value="Sec23_24_beta_S"/>
</dbReference>
<dbReference type="InterPro" id="IPR050550">
    <property type="entry name" value="SEC23_SEC24_subfamily"/>
</dbReference>
<dbReference type="InterPro" id="IPR041742">
    <property type="entry name" value="Sec24-like_trunk_dom"/>
</dbReference>
<dbReference type="InterPro" id="IPR036465">
    <property type="entry name" value="vWFA_dom_sf"/>
</dbReference>
<dbReference type="InterPro" id="IPR006895">
    <property type="entry name" value="Znf_Sec23_Sec24"/>
</dbReference>
<dbReference type="InterPro" id="IPR036174">
    <property type="entry name" value="Znf_Sec23_Sec24_sf"/>
</dbReference>
<dbReference type="PANTHER" id="PTHR13803:SF34">
    <property type="entry name" value="PROTEIN TRANSPORT PROTEIN SEC24 B"/>
    <property type="match status" value="1"/>
</dbReference>
<dbReference type="PANTHER" id="PTHR13803">
    <property type="entry name" value="SEC24-RELATED PROTEIN"/>
    <property type="match status" value="1"/>
</dbReference>
<dbReference type="Pfam" id="PF00626">
    <property type="entry name" value="Gelsolin"/>
    <property type="match status" value="1"/>
</dbReference>
<dbReference type="Pfam" id="PF08033">
    <property type="entry name" value="Sec23_BS"/>
    <property type="match status" value="1"/>
</dbReference>
<dbReference type="Pfam" id="PF04815">
    <property type="entry name" value="Sec23_helical"/>
    <property type="match status" value="1"/>
</dbReference>
<dbReference type="Pfam" id="PF04811">
    <property type="entry name" value="Sec23_trunk"/>
    <property type="match status" value="1"/>
</dbReference>
<dbReference type="Pfam" id="PF04810">
    <property type="entry name" value="zf-Sec23_Sec24"/>
    <property type="match status" value="1"/>
</dbReference>
<dbReference type="SUPFAM" id="SSF81995">
    <property type="entry name" value="beta-sandwich domain of Sec23/24"/>
    <property type="match status" value="1"/>
</dbReference>
<dbReference type="SUPFAM" id="SSF82754">
    <property type="entry name" value="C-terminal, gelsolin-like domain of Sec23/24"/>
    <property type="match status" value="1"/>
</dbReference>
<dbReference type="SUPFAM" id="SSF81811">
    <property type="entry name" value="Helical domain of Sec23/24"/>
    <property type="match status" value="1"/>
</dbReference>
<dbReference type="SUPFAM" id="SSF53300">
    <property type="entry name" value="vWA-like"/>
    <property type="match status" value="1"/>
</dbReference>
<dbReference type="SUPFAM" id="SSF82919">
    <property type="entry name" value="Zn-finger domain of Sec23/24"/>
    <property type="match status" value="1"/>
</dbReference>
<gene>
    <name evidence="6 7" type="primary">SEC24B</name>
    <name evidence="4" type="synonym">CEF</name>
    <name evidence="5" type="synonym">Lst1A</name>
    <name evidence="9" type="ordered locus">At3g44340</name>
    <name evidence="10" type="ORF">T22K7_20</name>
</gene>
<accession>Q9M291</accession>
<accession>A0A1I9LQT4</accession>
<accession>F4J1Y1</accession>
<organism>
    <name type="scientific">Arabidopsis thaliana</name>
    <name type="common">Mouse-ear cress</name>
    <dbReference type="NCBI Taxonomy" id="3702"/>
    <lineage>
        <taxon>Eukaryota</taxon>
        <taxon>Viridiplantae</taxon>
        <taxon>Streptophyta</taxon>
        <taxon>Embryophyta</taxon>
        <taxon>Tracheophyta</taxon>
        <taxon>Spermatophyta</taxon>
        <taxon>Magnoliopsida</taxon>
        <taxon>eudicotyledons</taxon>
        <taxon>Gunneridae</taxon>
        <taxon>Pentapetalae</taxon>
        <taxon>rosids</taxon>
        <taxon>malvids</taxon>
        <taxon>Brassicales</taxon>
        <taxon>Brassicaceae</taxon>
        <taxon>Camelineae</taxon>
        <taxon>Arabidopsis</taxon>
    </lineage>
</organism>
<keyword id="KW-0025">Alternative splicing</keyword>
<keyword id="KW-0968">Cytoplasmic vesicle</keyword>
<keyword id="KW-0256">Endoplasmic reticulum</keyword>
<keyword id="KW-0931">ER-Golgi transport</keyword>
<keyword id="KW-0333">Golgi apparatus</keyword>
<keyword id="KW-0472">Membrane</keyword>
<keyword id="KW-0479">Metal-binding</keyword>
<keyword id="KW-0653">Protein transport</keyword>
<keyword id="KW-1185">Reference proteome</keyword>
<keyword id="KW-0813">Transport</keyword>
<keyword id="KW-0862">Zinc</keyword>
<reference key="1">
    <citation type="journal article" date="2000" name="J. Exp. Bot.">
        <title>CEF, a sec24 homologue of Arabidopsis thaliana, enhances the survival of yeast under oxidative stress conditions.</title>
        <authorList>
            <person name="Belles-Boix E."/>
            <person name="Babiychuk E."/>
            <person name="Van Montagu M."/>
            <person name="Inze D."/>
            <person name="Kushnir S."/>
        </authorList>
    </citation>
    <scope>NUCLEOTIDE SEQUENCE [MRNA]</scope>
    <source>
        <strain>cv. Columbia</strain>
        <tissue>Seed</tissue>
    </source>
</reference>
<reference key="2">
    <citation type="journal article" date="2000" name="Nature">
        <title>Sequence and analysis of chromosome 3 of the plant Arabidopsis thaliana.</title>
        <authorList>
            <person name="Salanoubat M."/>
            <person name="Lemcke K."/>
            <person name="Rieger M."/>
            <person name="Ansorge W."/>
            <person name="Unseld M."/>
            <person name="Fartmann B."/>
            <person name="Valle G."/>
            <person name="Bloecker H."/>
            <person name="Perez-Alonso M."/>
            <person name="Obermaier B."/>
            <person name="Delseny M."/>
            <person name="Boutry M."/>
            <person name="Grivell L.A."/>
            <person name="Mache R."/>
            <person name="Puigdomenech P."/>
            <person name="De Simone V."/>
            <person name="Choisne N."/>
            <person name="Artiguenave F."/>
            <person name="Robert C."/>
            <person name="Brottier P."/>
            <person name="Wincker P."/>
            <person name="Cattolico L."/>
            <person name="Weissenbach J."/>
            <person name="Saurin W."/>
            <person name="Quetier F."/>
            <person name="Schaefer M."/>
            <person name="Mueller-Auer S."/>
            <person name="Gabel C."/>
            <person name="Fuchs M."/>
            <person name="Benes V."/>
            <person name="Wurmbach E."/>
            <person name="Drzonek H."/>
            <person name="Erfle H."/>
            <person name="Jordan N."/>
            <person name="Bangert S."/>
            <person name="Wiedelmann R."/>
            <person name="Kranz H."/>
            <person name="Voss H."/>
            <person name="Holland R."/>
            <person name="Brandt P."/>
            <person name="Nyakatura G."/>
            <person name="Vezzi A."/>
            <person name="D'Angelo M."/>
            <person name="Pallavicini A."/>
            <person name="Toppo S."/>
            <person name="Simionati B."/>
            <person name="Conrad A."/>
            <person name="Hornischer K."/>
            <person name="Kauer G."/>
            <person name="Loehnert T.-H."/>
            <person name="Nordsiek G."/>
            <person name="Reichelt J."/>
            <person name="Scharfe M."/>
            <person name="Schoen O."/>
            <person name="Bargues M."/>
            <person name="Terol J."/>
            <person name="Climent J."/>
            <person name="Navarro P."/>
            <person name="Collado C."/>
            <person name="Perez-Perez A."/>
            <person name="Ottenwaelder B."/>
            <person name="Duchemin D."/>
            <person name="Cooke R."/>
            <person name="Laudie M."/>
            <person name="Berger-Llauro C."/>
            <person name="Purnelle B."/>
            <person name="Masuy D."/>
            <person name="de Haan M."/>
            <person name="Maarse A.C."/>
            <person name="Alcaraz J.-P."/>
            <person name="Cottet A."/>
            <person name="Casacuberta E."/>
            <person name="Monfort A."/>
            <person name="Argiriou A."/>
            <person name="Flores M."/>
            <person name="Liguori R."/>
            <person name="Vitale D."/>
            <person name="Mannhaupt G."/>
            <person name="Haase D."/>
            <person name="Schoof H."/>
            <person name="Rudd S."/>
            <person name="Zaccaria P."/>
            <person name="Mewes H.-W."/>
            <person name="Mayer K.F.X."/>
            <person name="Kaul S."/>
            <person name="Town C.D."/>
            <person name="Koo H.L."/>
            <person name="Tallon L.J."/>
            <person name="Jenkins J."/>
            <person name="Rooney T."/>
            <person name="Rizzo M."/>
            <person name="Walts A."/>
            <person name="Utterback T."/>
            <person name="Fujii C.Y."/>
            <person name="Shea T.P."/>
            <person name="Creasy T.H."/>
            <person name="Haas B."/>
            <person name="Maiti R."/>
            <person name="Wu D."/>
            <person name="Peterson J."/>
            <person name="Van Aken S."/>
            <person name="Pai G."/>
            <person name="Militscher J."/>
            <person name="Sellers P."/>
            <person name="Gill J.E."/>
            <person name="Feldblyum T.V."/>
            <person name="Preuss D."/>
            <person name="Lin X."/>
            <person name="Nierman W.C."/>
            <person name="Salzberg S.L."/>
            <person name="White O."/>
            <person name="Venter J.C."/>
            <person name="Fraser C.M."/>
            <person name="Kaneko T."/>
            <person name="Nakamura Y."/>
            <person name="Sato S."/>
            <person name="Kato T."/>
            <person name="Asamizu E."/>
            <person name="Sasamoto S."/>
            <person name="Kimura T."/>
            <person name="Idesawa K."/>
            <person name="Kawashima K."/>
            <person name="Kishida Y."/>
            <person name="Kiyokawa C."/>
            <person name="Kohara M."/>
            <person name="Matsumoto M."/>
            <person name="Matsuno A."/>
            <person name="Muraki A."/>
            <person name="Nakayama S."/>
            <person name="Nakazaki N."/>
            <person name="Shinpo S."/>
            <person name="Takeuchi C."/>
            <person name="Wada T."/>
            <person name="Watanabe A."/>
            <person name="Yamada M."/>
            <person name="Yasuda M."/>
            <person name="Tabata S."/>
        </authorList>
    </citation>
    <scope>NUCLEOTIDE SEQUENCE [LARGE SCALE GENOMIC DNA]</scope>
    <source>
        <strain>cv. Columbia</strain>
    </source>
</reference>
<reference key="3">
    <citation type="journal article" date="2017" name="Plant J.">
        <title>Araport11: a complete reannotation of the Arabidopsis thaliana reference genome.</title>
        <authorList>
            <person name="Cheng C.Y."/>
            <person name="Krishnakumar V."/>
            <person name="Chan A.P."/>
            <person name="Thibaud-Nissen F."/>
            <person name="Schobel S."/>
            <person name="Town C.D."/>
        </authorList>
    </citation>
    <scope>GENOME REANNOTATION</scope>
    <source>
        <strain>cv. Columbia</strain>
    </source>
</reference>
<reference key="4">
    <citation type="journal article" date="2011" name="J. Exp. Bot.">
        <title>Evidence for the involvement of the Arabidopsis SEC24A in male transmission.</title>
        <authorList>
            <person name="Conger R."/>
            <person name="Chen Y."/>
            <person name="Fornaciari S."/>
            <person name="Faso C."/>
            <person name="Held M.A."/>
            <person name="Renna L."/>
            <person name="Brandizzi F."/>
        </authorList>
    </citation>
    <scope>TISSUE SPECIFICITY</scope>
    <scope>DEVELOPMENTAL STAGE</scope>
    <source>
        <strain>cv. Columbia</strain>
    </source>
</reference>
<reference key="5">
    <citation type="journal article" date="2014" name="Plant Physiol.">
        <title>Endomembrane trafficking protein SEC24A regulates cell size patterning in Arabidopsis.</title>
        <authorList>
            <person name="Qu X."/>
            <person name="Chatty P.R."/>
            <person name="Roeder A.H.K."/>
        </authorList>
    </citation>
    <scope>GENE FAMILY</scope>
    <source>
        <strain>cv. Landsberg erecta</strain>
    </source>
</reference>
<reference key="6">
    <citation type="journal article" date="2014" name="PLoS ONE">
        <title>Study of the plant COPII vesicle coat subunits by functional complementation of yeast Saccharomyces cerevisiae mutants.</title>
        <authorList>
            <person name="De Craene J.-O."/>
            <person name="Courte F."/>
            <person name="Rinaldi B."/>
            <person name="Fitterer C."/>
            <person name="Herranz M.C."/>
            <person name="Schmitt-Keichinger C."/>
            <person name="Ritzenthaler C."/>
            <person name="Friant S."/>
        </authorList>
    </citation>
    <scope>GENE FAMILY</scope>
    <source>
        <strain>cv. Columbia</strain>
    </source>
</reference>
<reference key="7">
    <citation type="journal article" date="2016" name="Trends Plant Sci.">
        <title>COPII paralogs in plants: functional redundancy or diversity?</title>
        <authorList>
            <person name="Chung K.P."/>
            <person name="Zeng Y."/>
            <person name="Jiang L."/>
        </authorList>
    </citation>
    <scope>REVIEW ON COAT PROTEIN COMPLEX II (COPII) VESICLES</scope>
    <scope>GENE FAMILY</scope>
    <scope>NOMENCLATURE</scope>
</reference>
<protein>
    <recommendedName>
        <fullName evidence="6 7">Protein transport protein SEC24 B</fullName>
    </recommendedName>
    <alternativeName>
        <fullName evidence="5">Lst1-homolog protein A</fullName>
        <shortName evidence="5">AtLst1A</shortName>
    </alternativeName>
    <alternativeName>
        <fullName evidence="4">Protein of the clone eighty-four</fullName>
    </alternativeName>
</protein>
<evidence type="ECO:0000250" key="1">
    <source>
        <dbReference type="UniProtKB" id="O95486"/>
    </source>
</evidence>
<evidence type="ECO:0000256" key="2">
    <source>
        <dbReference type="SAM" id="MobiDB-lite"/>
    </source>
</evidence>
<evidence type="ECO:0000269" key="3">
    <source>
    </source>
</evidence>
<evidence type="ECO:0000303" key="4">
    <source>
    </source>
</evidence>
<evidence type="ECO:0000303" key="5">
    <source>
    </source>
</evidence>
<evidence type="ECO:0000303" key="6">
    <source>
    </source>
</evidence>
<evidence type="ECO:0000303" key="7">
    <source>
    </source>
</evidence>
<evidence type="ECO:0000305" key="8"/>
<evidence type="ECO:0000312" key="9">
    <source>
        <dbReference type="Araport" id="AT3G44340"/>
    </source>
</evidence>
<evidence type="ECO:0000312" key="10">
    <source>
        <dbReference type="EMBL" id="CAB86912.1"/>
    </source>
</evidence>